<feature type="propeptide" id="PRO_0000397522" description="Removed in mature form; by autocatalysis" evidence="1">
    <location>
        <begin position="1"/>
        <end position="67"/>
    </location>
</feature>
<feature type="chain" id="PRO_0000397523" description="Proteasome subunit beta">
    <location>
        <begin position="68"/>
        <end position="303"/>
    </location>
</feature>
<feature type="active site" description="Nucleophile" evidence="1">
    <location>
        <position position="68"/>
    </location>
</feature>
<keyword id="KW-0068">Autocatalytic cleavage</keyword>
<keyword id="KW-0963">Cytoplasm</keyword>
<keyword id="KW-0378">Hydrolase</keyword>
<keyword id="KW-0645">Protease</keyword>
<keyword id="KW-0647">Proteasome</keyword>
<keyword id="KW-0888">Threonine protease</keyword>
<keyword id="KW-0865">Zymogen</keyword>
<reference key="1">
    <citation type="submission" date="2006-10" db="EMBL/GenBank/DDBJ databases">
        <authorList>
            <person name="Fleischmann R.D."/>
            <person name="Dodson R.J."/>
            <person name="Haft D.H."/>
            <person name="Merkel J.S."/>
            <person name="Nelson W.C."/>
            <person name="Fraser C.M."/>
        </authorList>
    </citation>
    <scope>NUCLEOTIDE SEQUENCE [LARGE SCALE GENOMIC DNA]</scope>
    <source>
        <strain>104</strain>
    </source>
</reference>
<name>PSB_MYCA1</name>
<organism>
    <name type="scientific">Mycobacterium avium (strain 104)</name>
    <dbReference type="NCBI Taxonomy" id="243243"/>
    <lineage>
        <taxon>Bacteria</taxon>
        <taxon>Bacillati</taxon>
        <taxon>Actinomycetota</taxon>
        <taxon>Actinomycetes</taxon>
        <taxon>Mycobacteriales</taxon>
        <taxon>Mycobacteriaceae</taxon>
        <taxon>Mycobacterium</taxon>
        <taxon>Mycobacterium avium complex (MAC)</taxon>
    </lineage>
</organism>
<protein>
    <recommendedName>
        <fullName evidence="1">Proteasome subunit beta</fullName>
        <ecNumber evidence="1">3.4.25.1</ecNumber>
    </recommendedName>
    <alternativeName>
        <fullName evidence="1">20S proteasome beta subunit</fullName>
    </alternativeName>
    <alternativeName>
        <fullName evidence="1">Proteasome core protein PrcB</fullName>
    </alternativeName>
</protein>
<evidence type="ECO:0000255" key="1">
    <source>
        <dbReference type="HAMAP-Rule" id="MF_02113"/>
    </source>
</evidence>
<sequence>MTWQFPDRLSTNSALPGPAFSGQPAVDLSSFADFLRRQAPELLPAALGGAQSGPASSSGGTGQLPHGTTIVALKYPGGVVLAGDRRSTQGNMIAGRDVKKVYITDDYTATGIAGTAAIAVEFARLYAVELEHYEKLEGVPLTFAGKVNRLAIMVRGNLAAAMQGLVALPLLAGYDIDARDPEGAGRIVSFDAAGGWNLEEEGYQSVGSGSIFAKSSMKKLYSQVVDADSAVRVAIEALYDAADDDSATGGPDLVRGIYPTAVTIGAEGALEVPESRIAELAREVIQSRSRADTFGPDAAGGDK</sequence>
<gene>
    <name evidence="1" type="primary">prcB</name>
    <name type="ordered locus">MAV_2404</name>
</gene>
<accession>A0QFB5</accession>
<dbReference type="EC" id="3.4.25.1" evidence="1"/>
<dbReference type="EMBL" id="CP000479">
    <property type="protein sequence ID" value="ABK68298.1"/>
    <property type="molecule type" value="Genomic_DNA"/>
</dbReference>
<dbReference type="RefSeq" id="WP_011724769.1">
    <property type="nucleotide sequence ID" value="NC_008595.1"/>
</dbReference>
<dbReference type="SMR" id="A0QFB5"/>
<dbReference type="MEROPS" id="T01.005"/>
<dbReference type="KEGG" id="mav:MAV_2404"/>
<dbReference type="HOGENOM" id="CLU_035750_2_0_11"/>
<dbReference type="UniPathway" id="UPA00997"/>
<dbReference type="Proteomes" id="UP000001574">
    <property type="component" value="Chromosome"/>
</dbReference>
<dbReference type="GO" id="GO:0005737">
    <property type="term" value="C:cytoplasm"/>
    <property type="evidence" value="ECO:0007669"/>
    <property type="project" value="UniProtKB-SubCell"/>
</dbReference>
<dbReference type="GO" id="GO:0019774">
    <property type="term" value="C:proteasome core complex, beta-subunit complex"/>
    <property type="evidence" value="ECO:0007669"/>
    <property type="project" value="UniProtKB-UniRule"/>
</dbReference>
<dbReference type="GO" id="GO:0004298">
    <property type="term" value="F:threonine-type endopeptidase activity"/>
    <property type="evidence" value="ECO:0007669"/>
    <property type="project" value="UniProtKB-UniRule"/>
</dbReference>
<dbReference type="GO" id="GO:0019941">
    <property type="term" value="P:modification-dependent protein catabolic process"/>
    <property type="evidence" value="ECO:0007669"/>
    <property type="project" value="UniProtKB-UniRule"/>
</dbReference>
<dbReference type="GO" id="GO:0010498">
    <property type="term" value="P:proteasomal protein catabolic process"/>
    <property type="evidence" value="ECO:0007669"/>
    <property type="project" value="UniProtKB-UniRule"/>
</dbReference>
<dbReference type="CDD" id="cd01906">
    <property type="entry name" value="proteasome_protease_HslV"/>
    <property type="match status" value="1"/>
</dbReference>
<dbReference type="FunFam" id="3.60.20.10:FF:000046">
    <property type="entry name" value="Proteasome subunit beta"/>
    <property type="match status" value="1"/>
</dbReference>
<dbReference type="Gene3D" id="3.60.20.10">
    <property type="entry name" value="Glutamine Phosphoribosylpyrophosphate, subunit 1, domain 1"/>
    <property type="match status" value="1"/>
</dbReference>
<dbReference type="HAMAP" id="MF_02113_B">
    <property type="entry name" value="Proteasome_B_B"/>
    <property type="match status" value="1"/>
</dbReference>
<dbReference type="InterPro" id="IPR029055">
    <property type="entry name" value="Ntn_hydrolases_N"/>
</dbReference>
<dbReference type="InterPro" id="IPR001353">
    <property type="entry name" value="Proteasome_sua/b"/>
</dbReference>
<dbReference type="InterPro" id="IPR023333">
    <property type="entry name" value="Proteasome_suB-type"/>
</dbReference>
<dbReference type="InterPro" id="IPR022483">
    <property type="entry name" value="PSB_actinobac"/>
</dbReference>
<dbReference type="NCBIfam" id="TIGR03690">
    <property type="entry name" value="20S_bact_beta"/>
    <property type="match status" value="1"/>
</dbReference>
<dbReference type="PANTHER" id="PTHR32194:SF0">
    <property type="entry name" value="ATP-DEPENDENT PROTEASE SUBUNIT HSLV"/>
    <property type="match status" value="1"/>
</dbReference>
<dbReference type="PANTHER" id="PTHR32194">
    <property type="entry name" value="METALLOPROTEASE TLDD"/>
    <property type="match status" value="1"/>
</dbReference>
<dbReference type="Pfam" id="PF00227">
    <property type="entry name" value="Proteasome"/>
    <property type="match status" value="1"/>
</dbReference>
<dbReference type="SUPFAM" id="SSF56235">
    <property type="entry name" value="N-terminal nucleophile aminohydrolases (Ntn hydrolases)"/>
    <property type="match status" value="1"/>
</dbReference>
<dbReference type="PROSITE" id="PS51476">
    <property type="entry name" value="PROTEASOME_BETA_2"/>
    <property type="match status" value="1"/>
</dbReference>
<comment type="function">
    <text evidence="1">Component of the proteasome core, a large protease complex with broad specificity involved in protein degradation.</text>
</comment>
<comment type="catalytic activity">
    <reaction evidence="1">
        <text>Cleavage of peptide bonds with very broad specificity.</text>
        <dbReference type="EC" id="3.4.25.1"/>
    </reaction>
</comment>
<comment type="activity regulation">
    <text evidence="1">The formation of the proteasomal ATPase ARC-20S proteasome complex, likely via the docking of the C-termini of ARC into the intersubunit pockets in the alpha-rings, may trigger opening of the gate for substrate entry. Interconversion between the open-gate and close-gate conformations leads to a dynamic regulation of the 20S proteasome proteolysis activity.</text>
</comment>
<comment type="pathway">
    <text evidence="1">Protein degradation; proteasomal Pup-dependent pathway.</text>
</comment>
<comment type="subunit">
    <text evidence="1">The 20S proteasome core is composed of 14 alpha and 14 beta subunits that assemble into four stacked heptameric rings, resulting in a barrel-shaped structure. The two inner rings, each composed of seven catalytic beta subunits, are sandwiched by two outer rings, each composed of seven alpha subunits. The catalytic chamber with the active sites is on the inside of the barrel. Has a gated structure, the ends of the cylinder being occluded by the N-termini of the alpha-subunits. Is capped by the proteasome-associated ATPase, ARC.</text>
</comment>
<comment type="subcellular location">
    <subcellularLocation>
        <location evidence="1">Cytoplasm</location>
    </subcellularLocation>
</comment>
<comment type="similarity">
    <text evidence="1">Belongs to the peptidase T1B family.</text>
</comment>
<proteinExistence type="inferred from homology"/>